<evidence type="ECO:0000255" key="1"/>
<evidence type="ECO:0000256" key="2">
    <source>
        <dbReference type="SAM" id="MobiDB-lite"/>
    </source>
</evidence>
<evidence type="ECO:0000305" key="3"/>
<reference key="1">
    <citation type="journal article" date="2002" name="Nature">
        <title>The genome sequence of Schizosaccharomyces pombe.</title>
        <authorList>
            <person name="Wood V."/>
            <person name="Gwilliam R."/>
            <person name="Rajandream M.A."/>
            <person name="Lyne M.H."/>
            <person name="Lyne R."/>
            <person name="Stewart A."/>
            <person name="Sgouros J.G."/>
            <person name="Peat N."/>
            <person name="Hayles J."/>
            <person name="Baker S.G."/>
            <person name="Basham D."/>
            <person name="Bowman S."/>
            <person name="Brooks K."/>
            <person name="Brown D."/>
            <person name="Brown S."/>
            <person name="Chillingworth T."/>
            <person name="Churcher C.M."/>
            <person name="Collins M."/>
            <person name="Connor R."/>
            <person name="Cronin A."/>
            <person name="Davis P."/>
            <person name="Feltwell T."/>
            <person name="Fraser A."/>
            <person name="Gentles S."/>
            <person name="Goble A."/>
            <person name="Hamlin N."/>
            <person name="Harris D.E."/>
            <person name="Hidalgo J."/>
            <person name="Hodgson G."/>
            <person name="Holroyd S."/>
            <person name="Hornsby T."/>
            <person name="Howarth S."/>
            <person name="Huckle E.J."/>
            <person name="Hunt S."/>
            <person name="Jagels K."/>
            <person name="James K.D."/>
            <person name="Jones L."/>
            <person name="Jones M."/>
            <person name="Leather S."/>
            <person name="McDonald S."/>
            <person name="McLean J."/>
            <person name="Mooney P."/>
            <person name="Moule S."/>
            <person name="Mungall K.L."/>
            <person name="Murphy L.D."/>
            <person name="Niblett D."/>
            <person name="Odell C."/>
            <person name="Oliver K."/>
            <person name="O'Neil S."/>
            <person name="Pearson D."/>
            <person name="Quail M.A."/>
            <person name="Rabbinowitsch E."/>
            <person name="Rutherford K.M."/>
            <person name="Rutter S."/>
            <person name="Saunders D."/>
            <person name="Seeger K."/>
            <person name="Sharp S."/>
            <person name="Skelton J."/>
            <person name="Simmonds M.N."/>
            <person name="Squares R."/>
            <person name="Squares S."/>
            <person name="Stevens K."/>
            <person name="Taylor K."/>
            <person name="Taylor R.G."/>
            <person name="Tivey A."/>
            <person name="Walsh S.V."/>
            <person name="Warren T."/>
            <person name="Whitehead S."/>
            <person name="Woodward J.R."/>
            <person name="Volckaert G."/>
            <person name="Aert R."/>
            <person name="Robben J."/>
            <person name="Grymonprez B."/>
            <person name="Weltjens I."/>
            <person name="Vanstreels E."/>
            <person name="Rieger M."/>
            <person name="Schaefer M."/>
            <person name="Mueller-Auer S."/>
            <person name="Gabel C."/>
            <person name="Fuchs M."/>
            <person name="Duesterhoeft A."/>
            <person name="Fritzc C."/>
            <person name="Holzer E."/>
            <person name="Moestl D."/>
            <person name="Hilbert H."/>
            <person name="Borzym K."/>
            <person name="Langer I."/>
            <person name="Beck A."/>
            <person name="Lehrach H."/>
            <person name="Reinhardt R."/>
            <person name="Pohl T.M."/>
            <person name="Eger P."/>
            <person name="Zimmermann W."/>
            <person name="Wedler H."/>
            <person name="Wambutt R."/>
            <person name="Purnelle B."/>
            <person name="Goffeau A."/>
            <person name="Cadieu E."/>
            <person name="Dreano S."/>
            <person name="Gloux S."/>
            <person name="Lelaure V."/>
            <person name="Mottier S."/>
            <person name="Galibert F."/>
            <person name="Aves S.J."/>
            <person name="Xiang Z."/>
            <person name="Hunt C."/>
            <person name="Moore K."/>
            <person name="Hurst S.M."/>
            <person name="Lucas M."/>
            <person name="Rochet M."/>
            <person name="Gaillardin C."/>
            <person name="Tallada V.A."/>
            <person name="Garzon A."/>
            <person name="Thode G."/>
            <person name="Daga R.R."/>
            <person name="Cruzado L."/>
            <person name="Jimenez J."/>
            <person name="Sanchez M."/>
            <person name="del Rey F."/>
            <person name="Benito J."/>
            <person name="Dominguez A."/>
            <person name="Revuelta J.L."/>
            <person name="Moreno S."/>
            <person name="Armstrong J."/>
            <person name="Forsburg S.L."/>
            <person name="Cerutti L."/>
            <person name="Lowe T."/>
            <person name="McCombie W.R."/>
            <person name="Paulsen I."/>
            <person name="Potashkin J."/>
            <person name="Shpakovski G.V."/>
            <person name="Ussery D."/>
            <person name="Barrell B.G."/>
            <person name="Nurse P."/>
        </authorList>
    </citation>
    <scope>NUCLEOTIDE SEQUENCE [LARGE SCALE GENOMIC DNA]</scope>
    <source>
        <strain>972 / ATCC 24843</strain>
    </source>
</reference>
<organism>
    <name type="scientific">Schizosaccharomyces pombe (strain 972 / ATCC 24843)</name>
    <name type="common">Fission yeast</name>
    <dbReference type="NCBI Taxonomy" id="284812"/>
    <lineage>
        <taxon>Eukaryota</taxon>
        <taxon>Fungi</taxon>
        <taxon>Dikarya</taxon>
        <taxon>Ascomycota</taxon>
        <taxon>Taphrinomycotina</taxon>
        <taxon>Schizosaccharomycetes</taxon>
        <taxon>Schizosaccharomycetales</taxon>
        <taxon>Schizosaccharomycetaceae</taxon>
        <taxon>Schizosaccharomyces</taxon>
    </lineage>
</organism>
<comment type="subcellular location">
    <subcellularLocation>
        <location>Secreted</location>
    </subcellularLocation>
    <subcellularLocation>
        <location evidence="3">Cell surface</location>
    </subcellularLocation>
</comment>
<gene>
    <name type="ORF">SPBPB7E8.01</name>
</gene>
<proteinExistence type="inferred from homology"/>
<accession>Q9C0V5</accession>
<dbReference type="EMBL" id="CU329671">
    <property type="protein sequence ID" value="CAC36931.1"/>
    <property type="molecule type" value="Genomic_DNA"/>
</dbReference>
<dbReference type="RefSeq" id="NP_596454.1">
    <property type="nucleotide sequence ID" value="NM_001022373.2"/>
</dbReference>
<dbReference type="BioGRID" id="277868">
    <property type="interactions" value="33"/>
</dbReference>
<dbReference type="STRING" id="284812.Q9C0V5"/>
<dbReference type="PaxDb" id="4896-SPBPB7E8.01.1"/>
<dbReference type="EnsemblFungi" id="SPBPB7E8.01.1">
    <property type="protein sequence ID" value="SPBPB7E8.01.1:pep"/>
    <property type="gene ID" value="SPBPB7E8.01"/>
</dbReference>
<dbReference type="KEGG" id="spo:2541357"/>
<dbReference type="PomBase" id="SPBPB7E8.01"/>
<dbReference type="VEuPathDB" id="FungiDB:SPBPB7E8.01"/>
<dbReference type="eggNOG" id="ENOG502SRIY">
    <property type="taxonomic scope" value="Eukaryota"/>
</dbReference>
<dbReference type="HOGENOM" id="CLU_479096_0_0_1"/>
<dbReference type="InParanoid" id="Q9C0V5"/>
<dbReference type="OMA" id="GWNEYIS"/>
<dbReference type="PRO" id="PR:Q9C0V5"/>
<dbReference type="Proteomes" id="UP000002485">
    <property type="component" value="Chromosome II"/>
</dbReference>
<dbReference type="GO" id="GO:0009897">
    <property type="term" value="C:external side of plasma membrane"/>
    <property type="evidence" value="ECO:0000304"/>
    <property type="project" value="PomBase"/>
</dbReference>
<dbReference type="GO" id="GO:0005576">
    <property type="term" value="C:extracellular region"/>
    <property type="evidence" value="ECO:0007669"/>
    <property type="project" value="UniProtKB-SubCell"/>
</dbReference>
<name>YOM1_SCHPO</name>
<feature type="signal peptide" evidence="1">
    <location>
        <begin position="1"/>
        <end position="22"/>
    </location>
</feature>
<feature type="chain" id="PRO_0000304044" description="Uncharacterized protein PB7E8.01">
    <location>
        <begin position="23"/>
        <end position="569"/>
    </location>
</feature>
<feature type="region of interest" description="Disordered" evidence="2">
    <location>
        <begin position="498"/>
        <end position="541"/>
    </location>
</feature>
<feature type="compositionally biased region" description="Low complexity" evidence="2">
    <location>
        <begin position="505"/>
        <end position="540"/>
    </location>
</feature>
<keyword id="KW-1185">Reference proteome</keyword>
<keyword id="KW-0964">Secreted</keyword>
<keyword id="KW-0732">Signal</keyword>
<protein>
    <recommendedName>
        <fullName>Uncharacterized protein PB7E8.01</fullName>
    </recommendedName>
</protein>
<sequence length="569" mass="61400">MSLLVKAALILKCASMLQGVSAQYFCRDTTFDKRTLESVRFESECIPTVNKRDLDPNAEGVYKRSFDGNMNPSDFQLLPLAPRDGAIVNVDKESFSKRSTTNMFDFNFSCYFGSDGHSNDTLCQQYIDVADSVGEQFSRVLNLNTPIVIDVTVVGACTGESVCSQGQGMVAGSIGGEASPSREIPMACSDGLTRYYPQAVVKQLGLSDPPSYADSDITIALNADANFYFGSGDMGYEAVDLAYVLFHEITHGLGFSTGWGVFGYENLTDPYMNALLPTVSYVIGEMNGETMYAFHDVIENAFDRNIFYSIDPNEGLPTIAEFFHSVGAAFTLKADSIAGVVAQMNDTTTQFHIQANEAYRKAINPGRLVIYPDAGIDTYSPFIYLDSSYVPFSSGSSLSHVALHHYDCEPNFLMRAFYTAGATLESYIECAYGSDQADVAYGPIGPAMRTVFRRMGYSVNNLTGVTNEYSESLAKRSLSEKPKTAPTGKQLALHPLRRETSILDSTNTTSTNATNTTTTTSSSSTASSSASASSSTSATSGAAGDLFSVSKNLMMTLTAGLCLITASLF</sequence>